<proteinExistence type="inferred from homology"/>
<accession>O59025</accession>
<organism>
    <name type="scientific">Pyrococcus horikoshii (strain ATCC 700860 / DSM 12428 / JCM 9974 / NBRC 100139 / OT-3)</name>
    <dbReference type="NCBI Taxonomy" id="70601"/>
    <lineage>
        <taxon>Archaea</taxon>
        <taxon>Methanobacteriati</taxon>
        <taxon>Methanobacteriota</taxon>
        <taxon>Thermococci</taxon>
        <taxon>Thermococcales</taxon>
        <taxon>Thermococcaceae</taxon>
        <taxon>Pyrococcus</taxon>
    </lineage>
</organism>
<dbReference type="EC" id="5.6.2.4" evidence="1"/>
<dbReference type="EMBL" id="BA000001">
    <property type="protein sequence ID" value="BAA30383.1"/>
    <property type="molecule type" value="Genomic_DNA"/>
</dbReference>
<dbReference type="PIR" id="E71073">
    <property type="entry name" value="E71073"/>
</dbReference>
<dbReference type="RefSeq" id="WP_010885366.1">
    <property type="nucleotide sequence ID" value="NC_000961.1"/>
</dbReference>
<dbReference type="SMR" id="O59025"/>
<dbReference type="STRING" id="70601.gene:9378247"/>
<dbReference type="EnsemblBacteria" id="BAA30383">
    <property type="protein sequence ID" value="BAA30383"/>
    <property type="gene ID" value="BAA30383"/>
</dbReference>
<dbReference type="GeneID" id="1443602"/>
<dbReference type="KEGG" id="pho:PH1280"/>
<dbReference type="eggNOG" id="arCOG00553">
    <property type="taxonomic scope" value="Archaea"/>
</dbReference>
<dbReference type="OrthoDB" id="371946at2157"/>
<dbReference type="BRENDA" id="3.6.4.13">
    <property type="organism ID" value="5244"/>
</dbReference>
<dbReference type="Proteomes" id="UP000000752">
    <property type="component" value="Chromosome"/>
</dbReference>
<dbReference type="GO" id="GO:0043138">
    <property type="term" value="F:3'-5' DNA helicase activity"/>
    <property type="evidence" value="ECO:0007669"/>
    <property type="project" value="UniProtKB-UniRule"/>
</dbReference>
<dbReference type="GO" id="GO:0005524">
    <property type="term" value="F:ATP binding"/>
    <property type="evidence" value="ECO:0007669"/>
    <property type="project" value="UniProtKB-UniRule"/>
</dbReference>
<dbReference type="GO" id="GO:0016887">
    <property type="term" value="F:ATP hydrolysis activity"/>
    <property type="evidence" value="ECO:0007669"/>
    <property type="project" value="RHEA"/>
</dbReference>
<dbReference type="GO" id="GO:0003677">
    <property type="term" value="F:DNA binding"/>
    <property type="evidence" value="ECO:0007669"/>
    <property type="project" value="UniProtKB-UniRule"/>
</dbReference>
<dbReference type="GO" id="GO:0006281">
    <property type="term" value="P:DNA repair"/>
    <property type="evidence" value="ECO:0007669"/>
    <property type="project" value="UniProtKB-UniRule"/>
</dbReference>
<dbReference type="CDD" id="cd18028">
    <property type="entry name" value="DEXHc_archSki2"/>
    <property type="match status" value="1"/>
</dbReference>
<dbReference type="CDD" id="cd18795">
    <property type="entry name" value="SF2_C_Ski2"/>
    <property type="match status" value="1"/>
</dbReference>
<dbReference type="Gene3D" id="1.10.3380.30">
    <property type="match status" value="1"/>
</dbReference>
<dbReference type="Gene3D" id="1.10.150.20">
    <property type="entry name" value="5' to 3' exonuclease, C-terminal subdomain"/>
    <property type="match status" value="1"/>
</dbReference>
<dbReference type="Gene3D" id="3.40.50.300">
    <property type="entry name" value="P-loop containing nucleotide triphosphate hydrolases"/>
    <property type="match status" value="2"/>
</dbReference>
<dbReference type="HAMAP" id="MF_00442">
    <property type="entry name" value="Helicase_Hel308"/>
    <property type="match status" value="1"/>
</dbReference>
<dbReference type="InterPro" id="IPR011545">
    <property type="entry name" value="DEAD/DEAH_box_helicase_dom"/>
</dbReference>
<dbReference type="InterPro" id="IPR048772">
    <property type="entry name" value="Hel308-like_dom4"/>
</dbReference>
<dbReference type="InterPro" id="IPR050474">
    <property type="entry name" value="Hel308_SKI2-like"/>
</dbReference>
<dbReference type="InterPro" id="IPR014001">
    <property type="entry name" value="Helicase_ATP-bd"/>
</dbReference>
<dbReference type="InterPro" id="IPR001650">
    <property type="entry name" value="Helicase_C-like"/>
</dbReference>
<dbReference type="InterPro" id="IPR022965">
    <property type="entry name" value="Helicase_Hel308"/>
</dbReference>
<dbReference type="InterPro" id="IPR003583">
    <property type="entry name" value="Hlx-hairpin-Hlx_DNA-bd_motif"/>
</dbReference>
<dbReference type="InterPro" id="IPR027417">
    <property type="entry name" value="P-loop_NTPase"/>
</dbReference>
<dbReference type="InterPro" id="IPR036390">
    <property type="entry name" value="WH_DNA-bd_sf"/>
</dbReference>
<dbReference type="NCBIfam" id="NF001308">
    <property type="entry name" value="PRK00254.1"/>
    <property type="match status" value="1"/>
</dbReference>
<dbReference type="PANTHER" id="PTHR47961:SF10">
    <property type="entry name" value="ATP-DEPENDENT DNA HELICASE HEL308"/>
    <property type="match status" value="1"/>
</dbReference>
<dbReference type="PANTHER" id="PTHR47961">
    <property type="entry name" value="DNA POLYMERASE THETA, PUTATIVE (AFU_ORTHOLOGUE AFUA_1G05260)-RELATED"/>
    <property type="match status" value="1"/>
</dbReference>
<dbReference type="Pfam" id="PF00270">
    <property type="entry name" value="DEAD"/>
    <property type="match status" value="1"/>
</dbReference>
<dbReference type="Pfam" id="PF00271">
    <property type="entry name" value="Helicase_C"/>
    <property type="match status" value="1"/>
</dbReference>
<dbReference type="Pfam" id="PF21280">
    <property type="entry name" value="Helicase_dom4_arc"/>
    <property type="match status" value="1"/>
</dbReference>
<dbReference type="Pfam" id="PF14520">
    <property type="entry name" value="HHH_5"/>
    <property type="match status" value="1"/>
</dbReference>
<dbReference type="SMART" id="SM00487">
    <property type="entry name" value="DEXDc"/>
    <property type="match status" value="1"/>
</dbReference>
<dbReference type="SMART" id="SM00490">
    <property type="entry name" value="HELICc"/>
    <property type="match status" value="1"/>
</dbReference>
<dbReference type="SMART" id="SM00278">
    <property type="entry name" value="HhH1"/>
    <property type="match status" value="2"/>
</dbReference>
<dbReference type="SUPFAM" id="SSF52540">
    <property type="entry name" value="P-loop containing nucleoside triphosphate hydrolases"/>
    <property type="match status" value="2"/>
</dbReference>
<dbReference type="SUPFAM" id="SSF158702">
    <property type="entry name" value="Sec63 N-terminal domain-like"/>
    <property type="match status" value="1"/>
</dbReference>
<dbReference type="SUPFAM" id="SSF46785">
    <property type="entry name" value="Winged helix' DNA-binding domain"/>
    <property type="match status" value="1"/>
</dbReference>
<dbReference type="PROSITE" id="PS51192">
    <property type="entry name" value="HELICASE_ATP_BIND_1"/>
    <property type="match status" value="1"/>
</dbReference>
<dbReference type="PROSITE" id="PS51194">
    <property type="entry name" value="HELICASE_CTER"/>
    <property type="match status" value="1"/>
</dbReference>
<dbReference type="PROSITE" id="PS51195">
    <property type="entry name" value="Q_MOTIF"/>
    <property type="match status" value="1"/>
</dbReference>
<sequence>MKVEELRIDERIKEVLKKRGISELYPPQAEALTSGILKGENALIAIPTASGKTLIAEIAIVNRLLKEGGKAVYLVPLKALAEEKFKEFKDWEELGLKVAMATGDYDSKDEWLGGYDIIIATAEKFDSLLRHGSSWIRNVKVLVVDEIHLIGSRDRGATLEFIITQMLNRAQIIGLSATIGNPEELAEWLNAKLIKSDWRPVKLRRGVFYQGFVFWEDGKTEKFNSWEELVYDAIKRSKGSLVFVNMRRKAEKTALELSKKIRNFLTKKELRELKELAESLEENPTNEKLAKALQGGVAFHHAGLGREERVLVEENFKKGLIKVVVATPTLSAGINTPAFRVIVRDTWRYSEFGMERIPILEIQQMMGRAGRPKYDEVGEAIIVSTTEEPSTVMERYIKGKPEKLFSQLSNESILRGQILALIATFNFSSFREIYDFLERTFYAYQGKDPYTLEDRIRDIVYFLLENEFIEITLDDEIKALPLGIRTAKLYIDPMTAKIFKDTLPKIEKDPNPLGILHVISLTPDLIPLPYGKKELPMLEDEYYSFKDRLYFELDWEDERKFLRAFKTALVLNAWINEVPEGEIVEKFNVEPGDIYRIVETAEWLVYSLKEIAKTLEYSQDVINYLETLRVRVKHGIREELIPLMELPMIGRKRARALYNAGFRDLESIKNARPAELLEVEGIGAKIVEAILKHLGREVKIVQKPRKGTLDYYLHP</sequence>
<evidence type="ECO:0000255" key="1">
    <source>
        <dbReference type="HAMAP-Rule" id="MF_00442"/>
    </source>
</evidence>
<name>HELS_PYRHO</name>
<keyword id="KW-0067">ATP-binding</keyword>
<keyword id="KW-0227">DNA damage</keyword>
<keyword id="KW-0234">DNA repair</keyword>
<keyword id="KW-0238">DNA-binding</keyword>
<keyword id="KW-0347">Helicase</keyword>
<keyword id="KW-0378">Hydrolase</keyword>
<keyword id="KW-0413">Isomerase</keyword>
<keyword id="KW-0547">Nucleotide-binding</keyword>
<comment type="function">
    <text evidence="1">DNA-dependent ATPase and 3'-5' DNA helicase that may be involved in repair of stalled replication forks.</text>
</comment>
<comment type="catalytic activity">
    <reaction evidence="1">
        <text>Couples ATP hydrolysis with the unwinding of duplex DNA by translocating in the 3'-5' direction.</text>
        <dbReference type="EC" id="5.6.2.4"/>
    </reaction>
</comment>
<comment type="catalytic activity">
    <reaction evidence="1">
        <text>ATP + H2O = ADP + phosphate + H(+)</text>
        <dbReference type="Rhea" id="RHEA:13065"/>
        <dbReference type="ChEBI" id="CHEBI:15377"/>
        <dbReference type="ChEBI" id="CHEBI:15378"/>
        <dbReference type="ChEBI" id="CHEBI:30616"/>
        <dbReference type="ChEBI" id="CHEBI:43474"/>
        <dbReference type="ChEBI" id="CHEBI:456216"/>
        <dbReference type="EC" id="5.6.2.4"/>
    </reaction>
</comment>
<comment type="subunit">
    <text evidence="1">Monomer.</text>
</comment>
<comment type="similarity">
    <text evidence="1">Belongs to the helicase family. Hel308 subfamily.</text>
</comment>
<protein>
    <recommendedName>
        <fullName evidence="1">ATP-dependent DNA helicase Hel308</fullName>
        <ecNumber evidence="1">5.6.2.4</ecNumber>
    </recommendedName>
    <alternativeName>
        <fullName evidence="1">DNA 3'-5' helicase Hel308</fullName>
    </alternativeName>
</protein>
<reference key="1">
    <citation type="journal article" date="1998" name="DNA Res.">
        <title>Complete sequence and gene organization of the genome of a hyper-thermophilic archaebacterium, Pyrococcus horikoshii OT3.</title>
        <authorList>
            <person name="Kawarabayasi Y."/>
            <person name="Sawada M."/>
            <person name="Horikawa H."/>
            <person name="Haikawa Y."/>
            <person name="Hino Y."/>
            <person name="Yamamoto S."/>
            <person name="Sekine M."/>
            <person name="Baba S."/>
            <person name="Kosugi H."/>
            <person name="Hosoyama A."/>
            <person name="Nagai Y."/>
            <person name="Sakai M."/>
            <person name="Ogura K."/>
            <person name="Otsuka R."/>
            <person name="Nakazawa H."/>
            <person name="Takamiya M."/>
            <person name="Ohfuku Y."/>
            <person name="Funahashi T."/>
            <person name="Tanaka T."/>
            <person name="Kudoh Y."/>
            <person name="Yamazaki J."/>
            <person name="Kushida N."/>
            <person name="Oguchi A."/>
            <person name="Aoki K."/>
            <person name="Yoshizawa T."/>
            <person name="Nakamura Y."/>
            <person name="Robb F.T."/>
            <person name="Horikoshi K."/>
            <person name="Masuchi Y."/>
            <person name="Shizuya H."/>
            <person name="Kikuchi H."/>
        </authorList>
    </citation>
    <scope>NUCLEOTIDE SEQUENCE [LARGE SCALE GENOMIC DNA]</scope>
    <source>
        <strain>ATCC 700860 / DSM 12428 / JCM 9974 / NBRC 100139 / OT-3</strain>
    </source>
</reference>
<gene>
    <name evidence="1" type="primary">hel308</name>
    <name type="ordered locus">PH1280</name>
</gene>
<feature type="chain" id="PRO_0000102111" description="ATP-dependent DNA helicase Hel308">
    <location>
        <begin position="1"/>
        <end position="715"/>
    </location>
</feature>
<feature type="domain" description="Helicase ATP-binding" evidence="1">
    <location>
        <begin position="33"/>
        <end position="197"/>
    </location>
</feature>
<feature type="domain" description="Helicase C-terminal" evidence="1">
    <location>
        <begin position="229"/>
        <end position="422"/>
    </location>
</feature>
<feature type="short sequence motif" description="Q motif">
    <location>
        <begin position="1"/>
        <end position="29"/>
    </location>
</feature>
<feature type="short sequence motif" description="DEAH box" evidence="1">
    <location>
        <begin position="145"/>
        <end position="148"/>
    </location>
</feature>
<feature type="binding site" evidence="1">
    <location>
        <position position="28"/>
    </location>
    <ligand>
        <name>ATP</name>
        <dbReference type="ChEBI" id="CHEBI:30616"/>
    </ligand>
</feature>
<feature type="binding site" evidence="1">
    <location>
        <begin position="46"/>
        <end position="53"/>
    </location>
    <ligand>
        <name>ATP</name>
        <dbReference type="ChEBI" id="CHEBI:30616"/>
    </ligand>
</feature>